<comment type="function">
    <text>Seems to be involved in cell adhesion through trans-homophilic and -heterophilic interactions, the latter including specifically interactions with NECTIN1. Does not act as receptor for alpha-herpesvirus entry into cells.</text>
</comment>
<comment type="function">
    <text evidence="9 11">(Microbial infection) Acts as a receptor for measles virus.</text>
</comment>
<comment type="subunit">
    <text evidence="4 5 10">Self-associates. Interacts via its Ig-like V-type domain with NECTIN1 Ig-like V-type domain. Interacts via its C-terminus with AFDN.</text>
</comment>
<comment type="subunit">
    <text evidence="9 11">(Microbial infection) Interacts (via N-terminus) with measles virus hemagglutinin protein (PubMed:22048310, PubMed:23202587).</text>
</comment>
<comment type="interaction">
    <interactant intactId="EBI-4314784">
        <id>Q96NY8</id>
    </interactant>
    <interactant intactId="EBI-10244198">
        <id>Q5J5C9</id>
        <label>DEFB121</label>
    </interactant>
    <organismsDiffer>false</organismsDiffer>
    <experiments>3</experiments>
</comment>
<comment type="interaction">
    <interactant intactId="EBI-4314784">
        <id>Q96NY8</id>
    </interactant>
    <interactant intactId="EBI-1771314">
        <id>Q15223</id>
        <label>NECTIN1</label>
    </interactant>
    <organismsDiffer>false</organismsDiffer>
    <experiments>5</experiments>
</comment>
<comment type="interaction">
    <interactant intactId="EBI-4314784">
        <id>Q96NY8</id>
    </interactant>
    <interactant intactId="EBI-4314784">
        <id>Q96NY8</id>
        <label>NECTIN4</label>
    </interactant>
    <organismsDiffer>false</organismsDiffer>
    <experiments>3</experiments>
</comment>
<comment type="interaction">
    <interactant intactId="EBI-4314784">
        <id>Q96NY8</id>
    </interactant>
    <interactant intactId="EBI-4314807">
        <id>Q495A1</id>
        <label>TIGIT</label>
    </interactant>
    <organismsDiffer>false</organismsDiffer>
    <experiments>2</experiments>
</comment>
<comment type="interaction">
    <interactant intactId="EBI-4314784">
        <id>Q96NY8</id>
    </interactant>
    <interactant intactId="EBI-21898620">
        <id>Q96NG8</id>
        <label>ZNF582</label>
    </interactant>
    <organismsDiffer>false</organismsDiffer>
    <experiments>2</experiments>
</comment>
<comment type="interaction">
    <interactant intactId="EBI-4314784">
        <id>Q96NY8</id>
    </interactant>
    <interactant intactId="EBI-5323300">
        <id>Q786F2</id>
        <label>H</label>
    </interactant>
    <organismsDiffer>true</organismsDiffer>
    <experiments>4</experiments>
</comment>
<comment type="subcellular location">
    <subcellularLocation>
        <location evidence="13">Cell membrane</location>
        <topology evidence="13">Single-pass type I membrane protein</topology>
    </subcellularLocation>
    <subcellularLocation>
        <location evidence="4">Cell junction</location>
        <location evidence="4">Adherens junction</location>
    </subcellularLocation>
    <text>Colocalizes with AFDN at cadherin-based adherens junctions (PubMed:11544254).</text>
</comment>
<comment type="subcellular location">
    <molecule>Processed poliovirus receptor-related protein 4</molecule>
    <subcellularLocation>
        <location evidence="6">Secreted</location>
    </subcellularLocation>
    <text>The secreted form is found in breast tumor patients (PubMed:15784625).</text>
</comment>
<comment type="alternative products">
    <event type="alternative splicing"/>
    <isoform>
        <id>Q96NY8-1</id>
        <name>1</name>
        <sequence type="displayed"/>
    </isoform>
    <isoform>
        <id>Q96NY8-2</id>
        <name>2</name>
        <sequence type="described" ref="VSP_056819 VSP_056820"/>
    </isoform>
</comment>
<comment type="tissue specificity">
    <text evidence="4 7">Predominantly expressed in placenta. Not detected in normal breast epithelium but expressed in breast carcinoma.</text>
</comment>
<comment type="PTM">
    <text evidence="6">The soluble form is produced by proteolytic cleavage at the cell surface (shedding), probably by ADAM17/TACE.</text>
</comment>
<comment type="disease" evidence="8">
    <disease id="DI-02899">
        <name>Ectodermal dysplasia-syndactyly syndrome 1</name>
        <acronym>EDSS1</acronym>
        <description>A form of ectodermal dysplasia, a heterogeneous group of disorders due to abnormal development of two or more ectodermal structures. EDSS1 is characterized by the association of hair and teeth abnormalities with cutaneous syndactyly of the hands and/or feet. Hair morphologic abnormalities include twists at irregular intervals (pilli torti) and swelling along the shafts, particularly associated with areas of breakage. Dental findings consist of abnormally widely spaced teeth, with peg-shaped and conical crowns. Patients have normal sweating.</description>
        <dbReference type="MIM" id="613573"/>
    </disease>
    <text>The disease is caused by variants affecting the gene represented in this entry.</text>
</comment>
<comment type="similarity">
    <text evidence="13">Belongs to the nectin family.</text>
</comment>
<comment type="online information" name="Atlas of Genetics and Cytogenetics in Oncology and Haematology">
    <link uri="https://atlasgeneticsoncology.org/gene/44141/PVRL4"/>
</comment>
<reference key="1">
    <citation type="journal article" date="2001" name="J. Biol. Chem.">
        <title>Nectin4/PRR4, a new afadin-associated member of the nectin family that trans-interacts with nectin1/PRR1 through V domain interaction.</title>
        <authorList>
            <person name="Reymond N."/>
            <person name="Fabre S."/>
            <person name="Lecocq E."/>
            <person name="Adelaide J."/>
            <person name="Dubreuil P."/>
            <person name="Lopez M."/>
        </authorList>
    </citation>
    <scope>NUCLEOTIDE SEQUENCE [MRNA] (ISOFORM 1)</scope>
    <scope>TISSUE SPECIFICITY</scope>
    <scope>SUBCELLULAR LOCATION</scope>
    <scope>SUBUNIT</scope>
    <scope>INTERACTION WITH AFDN AND NECTIN1</scope>
</reference>
<reference key="2">
    <citation type="journal article" date="2004" name="Nat. Genet.">
        <title>Complete sequencing and characterization of 21,243 full-length human cDNAs.</title>
        <authorList>
            <person name="Ota T."/>
            <person name="Suzuki Y."/>
            <person name="Nishikawa T."/>
            <person name="Otsuki T."/>
            <person name="Sugiyama T."/>
            <person name="Irie R."/>
            <person name="Wakamatsu A."/>
            <person name="Hayashi K."/>
            <person name="Sato H."/>
            <person name="Nagai K."/>
            <person name="Kimura K."/>
            <person name="Makita H."/>
            <person name="Sekine M."/>
            <person name="Obayashi M."/>
            <person name="Nishi T."/>
            <person name="Shibahara T."/>
            <person name="Tanaka T."/>
            <person name="Ishii S."/>
            <person name="Yamamoto J."/>
            <person name="Saito K."/>
            <person name="Kawai Y."/>
            <person name="Isono Y."/>
            <person name="Nakamura Y."/>
            <person name="Nagahari K."/>
            <person name="Murakami K."/>
            <person name="Yasuda T."/>
            <person name="Iwayanagi T."/>
            <person name="Wagatsuma M."/>
            <person name="Shiratori A."/>
            <person name="Sudo H."/>
            <person name="Hosoiri T."/>
            <person name="Kaku Y."/>
            <person name="Kodaira H."/>
            <person name="Kondo H."/>
            <person name="Sugawara M."/>
            <person name="Takahashi M."/>
            <person name="Kanda K."/>
            <person name="Yokoi T."/>
            <person name="Furuya T."/>
            <person name="Kikkawa E."/>
            <person name="Omura Y."/>
            <person name="Abe K."/>
            <person name="Kamihara K."/>
            <person name="Katsuta N."/>
            <person name="Sato K."/>
            <person name="Tanikawa M."/>
            <person name="Yamazaki M."/>
            <person name="Ninomiya K."/>
            <person name="Ishibashi T."/>
            <person name="Yamashita H."/>
            <person name="Murakawa K."/>
            <person name="Fujimori K."/>
            <person name="Tanai H."/>
            <person name="Kimata M."/>
            <person name="Watanabe M."/>
            <person name="Hiraoka S."/>
            <person name="Chiba Y."/>
            <person name="Ishida S."/>
            <person name="Ono Y."/>
            <person name="Takiguchi S."/>
            <person name="Watanabe S."/>
            <person name="Yosida M."/>
            <person name="Hotuta T."/>
            <person name="Kusano J."/>
            <person name="Kanehori K."/>
            <person name="Takahashi-Fujii A."/>
            <person name="Hara H."/>
            <person name="Tanase T.-O."/>
            <person name="Nomura Y."/>
            <person name="Togiya S."/>
            <person name="Komai F."/>
            <person name="Hara R."/>
            <person name="Takeuchi K."/>
            <person name="Arita M."/>
            <person name="Imose N."/>
            <person name="Musashino K."/>
            <person name="Yuuki H."/>
            <person name="Oshima A."/>
            <person name="Sasaki N."/>
            <person name="Aotsuka S."/>
            <person name="Yoshikawa Y."/>
            <person name="Matsunawa H."/>
            <person name="Ichihara T."/>
            <person name="Shiohata N."/>
            <person name="Sano S."/>
            <person name="Moriya S."/>
            <person name="Momiyama H."/>
            <person name="Satoh N."/>
            <person name="Takami S."/>
            <person name="Terashima Y."/>
            <person name="Suzuki O."/>
            <person name="Nakagawa S."/>
            <person name="Senoh A."/>
            <person name="Mizoguchi H."/>
            <person name="Goto Y."/>
            <person name="Shimizu F."/>
            <person name="Wakebe H."/>
            <person name="Hishigaki H."/>
            <person name="Watanabe T."/>
            <person name="Sugiyama A."/>
            <person name="Takemoto M."/>
            <person name="Kawakami B."/>
            <person name="Yamazaki M."/>
            <person name="Watanabe K."/>
            <person name="Kumagai A."/>
            <person name="Itakura S."/>
            <person name="Fukuzumi Y."/>
            <person name="Fujimori Y."/>
            <person name="Komiyama M."/>
            <person name="Tashiro H."/>
            <person name="Tanigami A."/>
            <person name="Fujiwara T."/>
            <person name="Ono T."/>
            <person name="Yamada K."/>
            <person name="Fujii Y."/>
            <person name="Ozaki K."/>
            <person name="Hirao M."/>
            <person name="Ohmori Y."/>
            <person name="Kawabata A."/>
            <person name="Hikiji T."/>
            <person name="Kobatake N."/>
            <person name="Inagaki H."/>
            <person name="Ikema Y."/>
            <person name="Okamoto S."/>
            <person name="Okitani R."/>
            <person name="Kawakami T."/>
            <person name="Noguchi S."/>
            <person name="Itoh T."/>
            <person name="Shigeta K."/>
            <person name="Senba T."/>
            <person name="Matsumura K."/>
            <person name="Nakajima Y."/>
            <person name="Mizuno T."/>
            <person name="Morinaga M."/>
            <person name="Sasaki M."/>
            <person name="Togashi T."/>
            <person name="Oyama M."/>
            <person name="Hata H."/>
            <person name="Watanabe M."/>
            <person name="Komatsu T."/>
            <person name="Mizushima-Sugano J."/>
            <person name="Satoh T."/>
            <person name="Shirai Y."/>
            <person name="Takahashi Y."/>
            <person name="Nakagawa K."/>
            <person name="Okumura K."/>
            <person name="Nagase T."/>
            <person name="Nomura N."/>
            <person name="Kikuchi H."/>
            <person name="Masuho Y."/>
            <person name="Yamashita R."/>
            <person name="Nakai K."/>
            <person name="Yada T."/>
            <person name="Nakamura Y."/>
            <person name="Ohara O."/>
            <person name="Isogai T."/>
            <person name="Sugano S."/>
        </authorList>
    </citation>
    <scope>NUCLEOTIDE SEQUENCE [LARGE SCALE MRNA] (ISOFORMS 1 AND 2)</scope>
    <source>
        <tissue>Placenta</tissue>
    </source>
</reference>
<reference key="3">
    <citation type="journal article" date="2006" name="Nature">
        <title>The DNA sequence and biological annotation of human chromosome 1.</title>
        <authorList>
            <person name="Gregory S.G."/>
            <person name="Barlow K.F."/>
            <person name="McLay K.E."/>
            <person name="Kaul R."/>
            <person name="Swarbreck D."/>
            <person name="Dunham A."/>
            <person name="Scott C.E."/>
            <person name="Howe K.L."/>
            <person name="Woodfine K."/>
            <person name="Spencer C.C.A."/>
            <person name="Jones M.C."/>
            <person name="Gillson C."/>
            <person name="Searle S."/>
            <person name="Zhou Y."/>
            <person name="Kokocinski F."/>
            <person name="McDonald L."/>
            <person name="Evans R."/>
            <person name="Phillips K."/>
            <person name="Atkinson A."/>
            <person name="Cooper R."/>
            <person name="Jones C."/>
            <person name="Hall R.E."/>
            <person name="Andrews T.D."/>
            <person name="Lloyd C."/>
            <person name="Ainscough R."/>
            <person name="Almeida J.P."/>
            <person name="Ambrose K.D."/>
            <person name="Anderson F."/>
            <person name="Andrew R.W."/>
            <person name="Ashwell R.I.S."/>
            <person name="Aubin K."/>
            <person name="Babbage A.K."/>
            <person name="Bagguley C.L."/>
            <person name="Bailey J."/>
            <person name="Beasley H."/>
            <person name="Bethel G."/>
            <person name="Bird C.P."/>
            <person name="Bray-Allen S."/>
            <person name="Brown J.Y."/>
            <person name="Brown A.J."/>
            <person name="Buckley D."/>
            <person name="Burton J."/>
            <person name="Bye J."/>
            <person name="Carder C."/>
            <person name="Chapman J.C."/>
            <person name="Clark S.Y."/>
            <person name="Clarke G."/>
            <person name="Clee C."/>
            <person name="Cobley V."/>
            <person name="Collier R.E."/>
            <person name="Corby N."/>
            <person name="Coville G.J."/>
            <person name="Davies J."/>
            <person name="Deadman R."/>
            <person name="Dunn M."/>
            <person name="Earthrowl M."/>
            <person name="Ellington A.G."/>
            <person name="Errington H."/>
            <person name="Frankish A."/>
            <person name="Frankland J."/>
            <person name="French L."/>
            <person name="Garner P."/>
            <person name="Garnett J."/>
            <person name="Gay L."/>
            <person name="Ghori M.R.J."/>
            <person name="Gibson R."/>
            <person name="Gilby L.M."/>
            <person name="Gillett W."/>
            <person name="Glithero R.J."/>
            <person name="Grafham D.V."/>
            <person name="Griffiths C."/>
            <person name="Griffiths-Jones S."/>
            <person name="Grocock R."/>
            <person name="Hammond S."/>
            <person name="Harrison E.S.I."/>
            <person name="Hart E."/>
            <person name="Haugen E."/>
            <person name="Heath P.D."/>
            <person name="Holmes S."/>
            <person name="Holt K."/>
            <person name="Howden P.J."/>
            <person name="Hunt A.R."/>
            <person name="Hunt S.E."/>
            <person name="Hunter G."/>
            <person name="Isherwood J."/>
            <person name="James R."/>
            <person name="Johnson C."/>
            <person name="Johnson D."/>
            <person name="Joy A."/>
            <person name="Kay M."/>
            <person name="Kershaw J.K."/>
            <person name="Kibukawa M."/>
            <person name="Kimberley A.M."/>
            <person name="King A."/>
            <person name="Knights A.J."/>
            <person name="Lad H."/>
            <person name="Laird G."/>
            <person name="Lawlor S."/>
            <person name="Leongamornlert D.A."/>
            <person name="Lloyd D.M."/>
            <person name="Loveland J."/>
            <person name="Lovell J."/>
            <person name="Lush M.J."/>
            <person name="Lyne R."/>
            <person name="Martin S."/>
            <person name="Mashreghi-Mohammadi M."/>
            <person name="Matthews L."/>
            <person name="Matthews N.S.W."/>
            <person name="McLaren S."/>
            <person name="Milne S."/>
            <person name="Mistry S."/>
            <person name="Moore M.J.F."/>
            <person name="Nickerson T."/>
            <person name="O'Dell C.N."/>
            <person name="Oliver K."/>
            <person name="Palmeiri A."/>
            <person name="Palmer S.A."/>
            <person name="Parker A."/>
            <person name="Patel D."/>
            <person name="Pearce A.V."/>
            <person name="Peck A.I."/>
            <person name="Pelan S."/>
            <person name="Phelps K."/>
            <person name="Phillimore B.J."/>
            <person name="Plumb R."/>
            <person name="Rajan J."/>
            <person name="Raymond C."/>
            <person name="Rouse G."/>
            <person name="Saenphimmachak C."/>
            <person name="Sehra H.K."/>
            <person name="Sheridan E."/>
            <person name="Shownkeen R."/>
            <person name="Sims S."/>
            <person name="Skuce C.D."/>
            <person name="Smith M."/>
            <person name="Steward C."/>
            <person name="Subramanian S."/>
            <person name="Sycamore N."/>
            <person name="Tracey A."/>
            <person name="Tromans A."/>
            <person name="Van Helmond Z."/>
            <person name="Wall M."/>
            <person name="Wallis J.M."/>
            <person name="White S."/>
            <person name="Whitehead S.L."/>
            <person name="Wilkinson J.E."/>
            <person name="Willey D.L."/>
            <person name="Williams H."/>
            <person name="Wilming L."/>
            <person name="Wray P.W."/>
            <person name="Wu Z."/>
            <person name="Coulson A."/>
            <person name="Vaudin M."/>
            <person name="Sulston J.E."/>
            <person name="Durbin R.M."/>
            <person name="Hubbard T."/>
            <person name="Wooster R."/>
            <person name="Dunham I."/>
            <person name="Carter N.P."/>
            <person name="McVean G."/>
            <person name="Ross M.T."/>
            <person name="Harrow J."/>
            <person name="Olson M.V."/>
            <person name="Beck S."/>
            <person name="Rogers J."/>
            <person name="Bentley D.R."/>
        </authorList>
    </citation>
    <scope>NUCLEOTIDE SEQUENCE [LARGE SCALE GENOMIC DNA]</scope>
</reference>
<reference key="4">
    <citation type="submission" date="2005-09" db="EMBL/GenBank/DDBJ databases">
        <authorList>
            <person name="Mural R.J."/>
            <person name="Istrail S."/>
            <person name="Sutton G.G."/>
            <person name="Florea L."/>
            <person name="Halpern A.L."/>
            <person name="Mobarry C.M."/>
            <person name="Lippert R."/>
            <person name="Walenz B."/>
            <person name="Shatkay H."/>
            <person name="Dew I."/>
            <person name="Miller J.R."/>
            <person name="Flanigan M.J."/>
            <person name="Edwards N.J."/>
            <person name="Bolanos R."/>
            <person name="Fasulo D."/>
            <person name="Halldorsson B.V."/>
            <person name="Hannenhalli S."/>
            <person name="Turner R."/>
            <person name="Yooseph S."/>
            <person name="Lu F."/>
            <person name="Nusskern D.R."/>
            <person name="Shue B.C."/>
            <person name="Zheng X.H."/>
            <person name="Zhong F."/>
            <person name="Delcher A.L."/>
            <person name="Huson D.H."/>
            <person name="Kravitz S.A."/>
            <person name="Mouchard L."/>
            <person name="Reinert K."/>
            <person name="Remington K.A."/>
            <person name="Clark A.G."/>
            <person name="Waterman M.S."/>
            <person name="Eichler E.E."/>
            <person name="Adams M.D."/>
            <person name="Hunkapiller M.W."/>
            <person name="Myers E.W."/>
            <person name="Venter J.C."/>
        </authorList>
    </citation>
    <scope>NUCLEOTIDE SEQUENCE [LARGE SCALE GENOMIC DNA]</scope>
</reference>
<reference key="5">
    <citation type="journal article" date="2004" name="Genome Res.">
        <title>The status, quality, and expansion of the NIH full-length cDNA project: the Mammalian Gene Collection (MGC).</title>
        <authorList>
            <consortium name="The MGC Project Team"/>
        </authorList>
    </citation>
    <scope>NUCLEOTIDE SEQUENCE [LARGE SCALE MRNA] (ISOFORM 1)</scope>
    <source>
        <tissue>Pancreas</tissue>
    </source>
</reference>
<reference key="6">
    <citation type="journal article" date="2002" name="J. Biol. Chem.">
        <title>Prominent role of the Ig-like V domain in trans-interactions of nectins. Nectin3 and nectin 4 bind to the predicted C-C'-C'-D beta-strands of the nectin1 V domain.</title>
        <authorList>
            <person name="Fabre S."/>
            <person name="Reymond N."/>
            <person name="Cocchi F."/>
            <person name="Menotti L."/>
            <person name="Dubreuil P."/>
            <person name="Campadelli-Fiume G."/>
            <person name="Lopez M."/>
        </authorList>
    </citation>
    <scope>INTERACTION WITH NECTIN1</scope>
</reference>
<reference key="7">
    <citation type="journal article" date="2005" name="J. Biol. Chem.">
        <title>Nectin-4, a new serological breast cancer marker, is a substrate for tumor necrosis factor-alpha-converting enzyme (TACE)/ADAM-17.</title>
        <authorList>
            <person name="Fabre-Lafay S."/>
            <person name="Garrido-Urbani S."/>
            <person name="Reymond N."/>
            <person name="Goncalves A."/>
            <person name="Dubreuil P."/>
            <person name="Lopez M."/>
        </authorList>
    </citation>
    <scope>PROTEOLYTIC PROCESSING</scope>
    <scope>SUBCELLULAR LOCATION</scope>
</reference>
<reference key="8">
    <citation type="journal article" date="2007" name="BMC Cancer">
        <title>Nectin-4 is a new histological and serological tumor associated marker for breast cancer.</title>
        <authorList>
            <person name="Fabre-Lafay S."/>
            <person name="Monville F."/>
            <person name="Garrido-Urbani S."/>
            <person name="Berruyer-Pouyet C."/>
            <person name="Ginestier C."/>
            <person name="Reymond N."/>
            <person name="Finetti P."/>
            <person name="Sauvan R."/>
            <person name="Adelaide J."/>
            <person name="Geneix J."/>
            <person name="Lecocq E."/>
            <person name="Popovici C."/>
            <person name="Dubreuil P."/>
            <person name="Viens P."/>
            <person name="Goncalves A."/>
            <person name="Charafe-Jauffret E."/>
            <person name="Jacquemier J."/>
            <person name="Birnbaum D."/>
            <person name="Lopez M."/>
        </authorList>
    </citation>
    <scope>TISSUE SPECIFICITY</scope>
</reference>
<reference key="9">
    <citation type="journal article" date="2011" name="Nature">
        <title>Adherens junction protein nectin-4 is the epithelial receptor for measles virus.</title>
        <authorList>
            <person name="Muhlebach M.D."/>
            <person name="Mateo M."/>
            <person name="Sinn P.L."/>
            <person name="Prufer S."/>
            <person name="Uhlig K.M."/>
            <person name="Leonard V.H."/>
            <person name="Navaratnarajah C.K."/>
            <person name="Frenzke M."/>
            <person name="Wong X.X."/>
            <person name="Sawatsky B."/>
            <person name="Ramachandran S."/>
            <person name="McCray P.B. Jr."/>
            <person name="Cichutek K."/>
            <person name="von Messling V."/>
            <person name="Lopez M."/>
            <person name="Cattaneo R."/>
        </authorList>
    </citation>
    <scope>FUNCTION (MICROBIAL INFECTION)</scope>
    <scope>INTERACTION WITH MEASLES VIRUS PROTEIN H (MICROBIAL INFECTION)</scope>
</reference>
<reference key="10">
    <citation type="journal article" date="2012" name="Nat. Struct. Mol. Biol.">
        <title>Nectin ectodomain structures reveal a canonical adhesive interface.</title>
        <authorList>
            <person name="Harrison O.J."/>
            <person name="Vendome J."/>
            <person name="Brasch J."/>
            <person name="Jin X."/>
            <person name="Hong S."/>
            <person name="Katsamba P.S."/>
            <person name="Ahlsen G."/>
            <person name="Troyanovsky R.B."/>
            <person name="Troyanovsky S.M."/>
            <person name="Honig B."/>
            <person name="Shapiro L."/>
        </authorList>
    </citation>
    <scope>X-RAY CRYSTALLOGRAPHY (3.5 ANGSTROMS) OF 32-243</scope>
    <scope>SUBUNIT</scope>
    <scope>DISULFIDE BONDS</scope>
    <scope>IDENTIFICATION BY MASS SPECTROMETRY</scope>
</reference>
<reference key="11">
    <citation type="journal article" date="2013" name="Nat. Struct. Mol. Biol.">
        <title>Structure of measles virus hemagglutinin bound to its epithelial receptor nectin-4.</title>
        <authorList>
            <person name="Zhang X."/>
            <person name="Lu G."/>
            <person name="Qi J."/>
            <person name="Li Y."/>
            <person name="He Y."/>
            <person name="Xu X."/>
            <person name="Shi J."/>
            <person name="Zhang C.W."/>
            <person name="Yan J."/>
            <person name="Gao G.F."/>
        </authorList>
    </citation>
    <scope>X-RAY CRYSTALLOGRAPHY (3.1 ANGSTROMS) OF 32-146 IN COMPLEX WITH MEASLES VIRUS HEMAGGLUTININ</scope>
    <scope>SUBUNIT</scope>
    <scope>DISULFIDE BOND</scope>
    <scope>FUNCTION (MICROBIAL INFECTION)</scope>
</reference>
<reference key="12">
    <citation type="journal article" date="2010" name="Am. J. Hum. Genet.">
        <title>Mutations in PVRL4, encoding cell adhesion molecule nectin-4, cause ectodermal dysplasia-syndactyly syndrome.</title>
        <authorList>
            <person name="Brancati F."/>
            <person name="Fortugno P."/>
            <person name="Bottillo I."/>
            <person name="Lopez M."/>
            <person name="Josselin E."/>
            <person name="Boudghene-Stambouli O."/>
            <person name="Agolini E."/>
            <person name="Bernardini L."/>
            <person name="Bellacchio E."/>
            <person name="Iannicelli M."/>
            <person name="Rossi A."/>
            <person name="Dib-Lachachi A."/>
            <person name="Stuppia L."/>
            <person name="Palka G."/>
            <person name="Mundlos S."/>
            <person name="Stricker S."/>
            <person name="Kornak U."/>
            <person name="Zambruno G."/>
            <person name="Dallapiccola B."/>
        </authorList>
    </citation>
    <scope>VARIANT EDSS1 MET-185</scope>
</reference>
<organism>
    <name type="scientific">Homo sapiens</name>
    <name type="common">Human</name>
    <dbReference type="NCBI Taxonomy" id="9606"/>
    <lineage>
        <taxon>Eukaryota</taxon>
        <taxon>Metazoa</taxon>
        <taxon>Chordata</taxon>
        <taxon>Craniata</taxon>
        <taxon>Vertebrata</taxon>
        <taxon>Euteleostomi</taxon>
        <taxon>Mammalia</taxon>
        <taxon>Eutheria</taxon>
        <taxon>Euarchontoglires</taxon>
        <taxon>Primates</taxon>
        <taxon>Haplorrhini</taxon>
        <taxon>Catarrhini</taxon>
        <taxon>Hominidae</taxon>
        <taxon>Homo</taxon>
    </lineage>
</organism>
<protein>
    <recommendedName>
        <fullName>Nectin-4</fullName>
    </recommendedName>
    <alternativeName>
        <fullName>Ig superfamily receptor LNIR</fullName>
    </alternativeName>
    <alternativeName>
        <fullName evidence="14">Nectin cell adhesion molecule 4</fullName>
    </alternativeName>
    <alternativeName>
        <fullName>Poliovirus receptor-related protein 4</fullName>
    </alternativeName>
    <component>
        <recommendedName>
            <fullName>Processed poliovirus receptor-related protein 4</fullName>
        </recommendedName>
    </component>
</protein>
<feature type="signal peptide" evidence="1">
    <location>
        <begin position="1"/>
        <end position="31"/>
    </location>
</feature>
<feature type="chain" id="PRO_0000297673" description="Nectin-4">
    <location>
        <begin position="32"/>
        <end position="510"/>
    </location>
</feature>
<feature type="chain" id="PRO_0000311086" description="Processed poliovirus receptor-related protein 4">
    <location>
        <begin position="32"/>
        <end status="unknown"/>
    </location>
</feature>
<feature type="topological domain" description="Extracellular" evidence="1">
    <location>
        <begin position="32"/>
        <end position="349"/>
    </location>
</feature>
<feature type="transmembrane region" description="Helical" evidence="1">
    <location>
        <begin position="350"/>
        <end position="370"/>
    </location>
</feature>
<feature type="topological domain" description="Cytoplasmic" evidence="1">
    <location>
        <begin position="371"/>
        <end position="510"/>
    </location>
</feature>
<feature type="domain" description="Ig-like V-type">
    <location>
        <begin position="32"/>
        <end position="144"/>
    </location>
</feature>
<feature type="domain" description="Ig-like C2-type 1">
    <location>
        <begin position="148"/>
        <end position="237"/>
    </location>
</feature>
<feature type="domain" description="Ig-like C2-type 2">
    <location>
        <begin position="248"/>
        <end position="331"/>
    </location>
</feature>
<feature type="region of interest" description="Disordered" evidence="3">
    <location>
        <begin position="399"/>
        <end position="447"/>
    </location>
</feature>
<feature type="region of interest" description="Disordered" evidence="3">
    <location>
        <begin position="457"/>
        <end position="476"/>
    </location>
</feature>
<feature type="compositionally biased region" description="Basic and acidic residues" evidence="3">
    <location>
        <begin position="399"/>
        <end position="412"/>
    </location>
</feature>
<feature type="glycosylation site" description="N-linked (GlcNAc...) asparagine" evidence="1">
    <location>
        <position position="281"/>
    </location>
</feature>
<feature type="disulfide bond" evidence="10 11 15">
    <location>
        <begin position="52"/>
        <end position="127"/>
    </location>
</feature>
<feature type="disulfide bond" evidence="10 15">
    <location>
        <begin position="171"/>
        <end position="223"/>
    </location>
</feature>
<feature type="disulfide bond" evidence="2">
    <location>
        <begin position="270"/>
        <end position="315"/>
    </location>
</feature>
<feature type="splice variant" id="VSP_056819" description="In isoform 2." evidence="12">
    <location>
        <begin position="1"/>
        <end position="266"/>
    </location>
</feature>
<feature type="splice variant" id="VSP_056820" description="In isoform 2." evidence="12">
    <location>
        <begin position="412"/>
        <end position="436"/>
    </location>
</feature>
<feature type="sequence variant" id="VAR_034669" description="In dbSNP:rs3737786.">
    <original>F</original>
    <variation>L</variation>
    <location>
        <position position="53"/>
    </location>
</feature>
<feature type="sequence variant" id="VAR_064189" description="In EDSS1; dbSNP:rs267606992." evidence="8">
    <original>T</original>
    <variation>M</variation>
    <location>
        <position position="185"/>
    </location>
</feature>
<feature type="sequence conflict" description="In Ref. 2; BAB55344." evidence="13" ref="2">
    <original>E</original>
    <variation>G</variation>
    <location>
        <position position="35"/>
    </location>
</feature>
<feature type="strand" evidence="17">
    <location>
        <begin position="38"/>
        <end position="43"/>
    </location>
</feature>
<feature type="strand" evidence="17">
    <location>
        <begin position="48"/>
        <end position="50"/>
    </location>
</feature>
<feature type="strand" evidence="17">
    <location>
        <begin position="62"/>
        <end position="69"/>
    </location>
</feature>
<feature type="strand" evidence="16">
    <location>
        <begin position="72"/>
        <end position="74"/>
    </location>
</feature>
<feature type="strand" evidence="17">
    <location>
        <begin position="77"/>
        <end position="83"/>
    </location>
</feature>
<feature type="turn" evidence="17">
    <location>
        <begin position="84"/>
        <end position="86"/>
    </location>
</feature>
<feature type="strand" evidence="17">
    <location>
        <begin position="87"/>
        <end position="90"/>
    </location>
</feature>
<feature type="helix" evidence="17">
    <location>
        <begin position="92"/>
        <end position="94"/>
    </location>
</feature>
<feature type="turn" evidence="17">
    <location>
        <begin position="95"/>
        <end position="97"/>
    </location>
</feature>
<feature type="strand" evidence="17">
    <location>
        <begin position="112"/>
        <end position="114"/>
    </location>
</feature>
<feature type="helix" evidence="17">
    <location>
        <begin position="119"/>
        <end position="121"/>
    </location>
</feature>
<feature type="strand" evidence="17">
    <location>
        <begin position="123"/>
        <end position="134"/>
    </location>
</feature>
<feature type="strand" evidence="17">
    <location>
        <begin position="136"/>
        <end position="146"/>
    </location>
</feature>
<feature type="strand" evidence="16">
    <location>
        <begin position="152"/>
        <end position="155"/>
    </location>
</feature>
<feature type="strand" evidence="16">
    <location>
        <begin position="165"/>
        <end position="177"/>
    </location>
</feature>
<feature type="strand" evidence="16">
    <location>
        <begin position="180"/>
        <end position="187"/>
    </location>
</feature>
<feature type="strand" evidence="16">
    <location>
        <begin position="190"/>
        <end position="197"/>
    </location>
</feature>
<feature type="strand" evidence="16">
    <location>
        <begin position="199"/>
        <end position="210"/>
    </location>
</feature>
<feature type="helix" evidence="16">
    <location>
        <begin position="214"/>
        <end position="216"/>
    </location>
</feature>
<feature type="strand" evidence="16">
    <location>
        <begin position="220"/>
        <end position="226"/>
    </location>
</feature>
<feature type="strand" evidence="16">
    <location>
        <begin position="234"/>
        <end position="239"/>
    </location>
</feature>
<accession>Q96NY8</accession>
<accession>B4DQW3</accession>
<accession>Q96K15</accession>
<proteinExistence type="evidence at protein level"/>
<dbReference type="EMBL" id="AF426163">
    <property type="protein sequence ID" value="AAL23958.1"/>
    <property type="molecule type" value="mRNA"/>
</dbReference>
<dbReference type="EMBL" id="AK027753">
    <property type="protein sequence ID" value="BAB55344.1"/>
    <property type="molecule type" value="mRNA"/>
</dbReference>
<dbReference type="EMBL" id="AK298981">
    <property type="protein sequence ID" value="BAG61075.1"/>
    <property type="molecule type" value="mRNA"/>
</dbReference>
<dbReference type="EMBL" id="AL591806">
    <property type="status" value="NOT_ANNOTATED_CDS"/>
    <property type="molecule type" value="Genomic_DNA"/>
</dbReference>
<dbReference type="EMBL" id="CH471121">
    <property type="protein sequence ID" value="EAW52665.1"/>
    <property type="molecule type" value="Genomic_DNA"/>
</dbReference>
<dbReference type="EMBL" id="BC010423">
    <property type="protein sequence ID" value="AAH10423.1"/>
    <property type="molecule type" value="mRNA"/>
</dbReference>
<dbReference type="CCDS" id="CCDS1216.1">
    <molecule id="Q96NY8-1"/>
</dbReference>
<dbReference type="RefSeq" id="NP_112178.2">
    <molecule id="Q96NY8-1"/>
    <property type="nucleotide sequence ID" value="NM_030916.3"/>
</dbReference>
<dbReference type="PDB" id="4FRW">
    <property type="method" value="X-ray"/>
    <property type="resolution" value="3.50 A"/>
    <property type="chains" value="A/B/C/D/E/F=32-243"/>
</dbReference>
<dbReference type="PDB" id="4GJT">
    <property type="method" value="X-ray"/>
    <property type="resolution" value="3.10 A"/>
    <property type="chains" value="B/C=32-146"/>
</dbReference>
<dbReference type="PDB" id="4JJH">
    <property type="method" value="X-ray"/>
    <property type="resolution" value="2.25 A"/>
    <property type="chains" value="A/B=32-153"/>
</dbReference>
<dbReference type="PDBsum" id="4FRW"/>
<dbReference type="PDBsum" id="4GJT"/>
<dbReference type="PDBsum" id="4JJH"/>
<dbReference type="SMR" id="Q96NY8"/>
<dbReference type="BioGRID" id="123544">
    <property type="interactions" value="27"/>
</dbReference>
<dbReference type="CORUM" id="Q96NY8"/>
<dbReference type="DIP" id="DIP-41492N"/>
<dbReference type="FunCoup" id="Q96NY8">
    <property type="interactions" value="203"/>
</dbReference>
<dbReference type="IntAct" id="Q96NY8">
    <property type="interactions" value="23"/>
</dbReference>
<dbReference type="MINT" id="Q96NY8"/>
<dbReference type="STRING" id="9606.ENSP00000356991"/>
<dbReference type="BindingDB" id="Q96NY8"/>
<dbReference type="ChEMBL" id="CHEMBL3712928"/>
<dbReference type="DrugBank" id="DB13007">
    <property type="generic name" value="Enfortumab vedotin"/>
</dbReference>
<dbReference type="DrugCentral" id="Q96NY8"/>
<dbReference type="GuidetoPHARMACOLOGY" id="3112"/>
<dbReference type="GlyConnect" id="1538">
    <property type="glycosylation" value="7 N-Linked glycans (1 site)"/>
</dbReference>
<dbReference type="GlyCosmos" id="Q96NY8">
    <property type="glycosylation" value="1 site, 6 glycans"/>
</dbReference>
<dbReference type="GlyGen" id="Q96NY8">
    <property type="glycosylation" value="2 sites, 7 N-linked glycans (2 sites)"/>
</dbReference>
<dbReference type="iPTMnet" id="Q96NY8"/>
<dbReference type="PhosphoSitePlus" id="Q96NY8"/>
<dbReference type="BioMuta" id="NECTIN4"/>
<dbReference type="DMDM" id="74761016"/>
<dbReference type="jPOST" id="Q96NY8"/>
<dbReference type="MassIVE" id="Q96NY8"/>
<dbReference type="PaxDb" id="9606-ENSP00000356991"/>
<dbReference type="PeptideAtlas" id="Q96NY8"/>
<dbReference type="ProteomicsDB" id="4909"/>
<dbReference type="ProteomicsDB" id="77578">
    <molecule id="Q96NY8-1"/>
</dbReference>
<dbReference type="ABCD" id="Q96NY8">
    <property type="antibodies" value="2 sequenced antibodies"/>
</dbReference>
<dbReference type="Antibodypedia" id="2488">
    <property type="antibodies" value="262 antibodies from 34 providers"/>
</dbReference>
<dbReference type="DNASU" id="81607"/>
<dbReference type="Ensembl" id="ENST00000368012.4">
    <molecule id="Q96NY8-1"/>
    <property type="protein sequence ID" value="ENSP00000356991.3"/>
    <property type="gene ID" value="ENSG00000143217.9"/>
</dbReference>
<dbReference type="GeneID" id="81607"/>
<dbReference type="KEGG" id="hsa:81607"/>
<dbReference type="MANE-Select" id="ENST00000368012.4">
    <property type="protein sequence ID" value="ENSP00000356991.3"/>
    <property type="RefSeq nucleotide sequence ID" value="NM_030916.3"/>
    <property type="RefSeq protein sequence ID" value="NP_112178.2"/>
</dbReference>
<dbReference type="UCSC" id="uc001fxo.3">
    <molecule id="Q96NY8-1"/>
    <property type="organism name" value="human"/>
</dbReference>
<dbReference type="AGR" id="HGNC:19688"/>
<dbReference type="CTD" id="81607"/>
<dbReference type="DisGeNET" id="81607"/>
<dbReference type="GeneCards" id="NECTIN4"/>
<dbReference type="HGNC" id="HGNC:19688">
    <property type="gene designation" value="NECTIN4"/>
</dbReference>
<dbReference type="HPA" id="ENSG00000143217">
    <property type="expression patterns" value="Tissue enhanced (esophagus, skin, vagina)"/>
</dbReference>
<dbReference type="MalaCards" id="NECTIN4"/>
<dbReference type="MIM" id="609607">
    <property type="type" value="gene"/>
</dbReference>
<dbReference type="MIM" id="613573">
    <property type="type" value="phenotype"/>
</dbReference>
<dbReference type="neXtProt" id="NX_Q96NY8"/>
<dbReference type="OpenTargets" id="ENSG00000143217"/>
<dbReference type="Orphanet" id="247820">
    <property type="disease" value="Ectodermal dysplasia-pili torti-cutaneous syndactyly syndrome"/>
</dbReference>
<dbReference type="PharmGKB" id="PA134991624"/>
<dbReference type="VEuPathDB" id="HostDB:ENSG00000143217"/>
<dbReference type="eggNOG" id="ENOG502R9I0">
    <property type="taxonomic scope" value="Eukaryota"/>
</dbReference>
<dbReference type="GeneTree" id="ENSGT00940000157535"/>
<dbReference type="HOGENOM" id="CLU_029618_1_1_1"/>
<dbReference type="InParanoid" id="Q96NY8"/>
<dbReference type="OMA" id="MFYESNG"/>
<dbReference type="OrthoDB" id="8872282at2759"/>
<dbReference type="PAN-GO" id="Q96NY8">
    <property type="GO annotations" value="3 GO annotations based on evolutionary models"/>
</dbReference>
<dbReference type="PhylomeDB" id="Q96NY8"/>
<dbReference type="TreeFam" id="TF338610"/>
<dbReference type="PathwayCommons" id="Q96NY8"/>
<dbReference type="Reactome" id="R-HSA-418990">
    <property type="pathway name" value="Adherens junctions interactions"/>
</dbReference>
<dbReference type="Reactome" id="R-HSA-420597">
    <property type="pathway name" value="Nectin/Necl trans heterodimerization"/>
</dbReference>
<dbReference type="SignaLink" id="Q96NY8"/>
<dbReference type="BioGRID-ORCS" id="81607">
    <property type="hits" value="36 hits in 1129 CRISPR screens"/>
</dbReference>
<dbReference type="ChiTaRS" id="NECTIN4">
    <property type="organism name" value="human"/>
</dbReference>
<dbReference type="EvolutionaryTrace" id="Q96NY8"/>
<dbReference type="GenomeRNAi" id="81607"/>
<dbReference type="Pharos" id="Q96NY8">
    <property type="development level" value="Tclin"/>
</dbReference>
<dbReference type="PRO" id="PR:Q96NY8"/>
<dbReference type="Proteomes" id="UP000005640">
    <property type="component" value="Chromosome 1"/>
</dbReference>
<dbReference type="RNAct" id="Q96NY8">
    <property type="molecule type" value="protein"/>
</dbReference>
<dbReference type="Bgee" id="ENSG00000143217">
    <property type="expression patterns" value="Expressed in lower esophagus mucosa and 122 other cell types or tissues"/>
</dbReference>
<dbReference type="ExpressionAtlas" id="Q96NY8">
    <property type="expression patterns" value="baseline and differential"/>
</dbReference>
<dbReference type="GO" id="GO:0005912">
    <property type="term" value="C:adherens junction"/>
    <property type="evidence" value="ECO:0000314"/>
    <property type="project" value="BHF-UCL"/>
</dbReference>
<dbReference type="GO" id="GO:0070062">
    <property type="term" value="C:extracellular exosome"/>
    <property type="evidence" value="ECO:0007005"/>
    <property type="project" value="UniProtKB"/>
</dbReference>
<dbReference type="GO" id="GO:0005886">
    <property type="term" value="C:plasma membrane"/>
    <property type="evidence" value="ECO:0000314"/>
    <property type="project" value="HPA"/>
</dbReference>
<dbReference type="GO" id="GO:0042802">
    <property type="term" value="F:identical protein binding"/>
    <property type="evidence" value="ECO:0000353"/>
    <property type="project" value="IntAct"/>
</dbReference>
<dbReference type="GO" id="GO:0048018">
    <property type="term" value="F:receptor ligand activity"/>
    <property type="evidence" value="ECO:0000314"/>
    <property type="project" value="UniProt"/>
</dbReference>
<dbReference type="GO" id="GO:0001618">
    <property type="term" value="F:virus receptor activity"/>
    <property type="evidence" value="ECO:0007669"/>
    <property type="project" value="UniProtKB-KW"/>
</dbReference>
<dbReference type="GO" id="GO:0007157">
    <property type="term" value="P:heterophilic cell-cell adhesion via plasma membrane cell adhesion molecules"/>
    <property type="evidence" value="ECO:0000318"/>
    <property type="project" value="GO_Central"/>
</dbReference>
<dbReference type="GO" id="GO:0007156">
    <property type="term" value="P:homophilic cell adhesion via plasma membrane adhesion molecules"/>
    <property type="evidence" value="ECO:0000318"/>
    <property type="project" value="GO_Central"/>
</dbReference>
<dbReference type="GO" id="GO:0045953">
    <property type="term" value="P:negative regulation of natural killer cell mediated cytotoxicity"/>
    <property type="evidence" value="ECO:0000314"/>
    <property type="project" value="UniProt"/>
</dbReference>
<dbReference type="CDD" id="cd00096">
    <property type="entry name" value="Ig"/>
    <property type="match status" value="1"/>
</dbReference>
<dbReference type="CDD" id="cd07704">
    <property type="entry name" value="IgC1_2_Nectin-3-4_like"/>
    <property type="match status" value="1"/>
</dbReference>
<dbReference type="CDD" id="cd05888">
    <property type="entry name" value="IgV_1_Nectin-4_like"/>
    <property type="match status" value="1"/>
</dbReference>
<dbReference type="FunFam" id="2.60.40.10:FF:000560">
    <property type="entry name" value="Nectin cell adhesion molecule 4"/>
    <property type="match status" value="1"/>
</dbReference>
<dbReference type="FunFam" id="2.60.40.10:FF:000627">
    <property type="entry name" value="Nectin cell adhesion molecule 4"/>
    <property type="match status" value="1"/>
</dbReference>
<dbReference type="FunFam" id="2.60.40.10:FF:001007">
    <property type="entry name" value="nectin-4 isoform X2"/>
    <property type="match status" value="1"/>
</dbReference>
<dbReference type="Gene3D" id="2.60.40.10">
    <property type="entry name" value="Immunoglobulins"/>
    <property type="match status" value="3"/>
</dbReference>
<dbReference type="InterPro" id="IPR013162">
    <property type="entry name" value="CD80_C2-set"/>
</dbReference>
<dbReference type="InterPro" id="IPR007110">
    <property type="entry name" value="Ig-like_dom"/>
</dbReference>
<dbReference type="InterPro" id="IPR036179">
    <property type="entry name" value="Ig-like_dom_sf"/>
</dbReference>
<dbReference type="InterPro" id="IPR013783">
    <property type="entry name" value="Ig-like_fold"/>
</dbReference>
<dbReference type="InterPro" id="IPR003599">
    <property type="entry name" value="Ig_sub"/>
</dbReference>
<dbReference type="InterPro" id="IPR003598">
    <property type="entry name" value="Ig_sub2"/>
</dbReference>
<dbReference type="InterPro" id="IPR013106">
    <property type="entry name" value="Ig_V-set"/>
</dbReference>
<dbReference type="InterPro" id="IPR033320">
    <property type="entry name" value="IgC1_2_Nectin-3-4-like"/>
</dbReference>
<dbReference type="InterPro" id="IPR051427">
    <property type="entry name" value="Nectin/Nectin-like"/>
</dbReference>
<dbReference type="PANTHER" id="PTHR23277:SF11">
    <property type="entry name" value="NECTIN-4"/>
    <property type="match status" value="1"/>
</dbReference>
<dbReference type="PANTHER" id="PTHR23277">
    <property type="entry name" value="NECTIN-RELATED"/>
    <property type="match status" value="1"/>
</dbReference>
<dbReference type="Pfam" id="PF08205">
    <property type="entry name" value="C2-set_2"/>
    <property type="match status" value="1"/>
</dbReference>
<dbReference type="Pfam" id="PF13927">
    <property type="entry name" value="Ig_3"/>
    <property type="match status" value="1"/>
</dbReference>
<dbReference type="Pfam" id="PF07686">
    <property type="entry name" value="V-set"/>
    <property type="match status" value="1"/>
</dbReference>
<dbReference type="SMART" id="SM00409">
    <property type="entry name" value="IG"/>
    <property type="match status" value="2"/>
</dbReference>
<dbReference type="SMART" id="SM00408">
    <property type="entry name" value="IGc2"/>
    <property type="match status" value="2"/>
</dbReference>
<dbReference type="SUPFAM" id="SSF48726">
    <property type="entry name" value="Immunoglobulin"/>
    <property type="match status" value="3"/>
</dbReference>
<dbReference type="PROSITE" id="PS50835">
    <property type="entry name" value="IG_LIKE"/>
    <property type="match status" value="3"/>
</dbReference>
<keyword id="KW-0002">3D-structure</keyword>
<keyword id="KW-0025">Alternative splicing</keyword>
<keyword id="KW-0130">Cell adhesion</keyword>
<keyword id="KW-0965">Cell junction</keyword>
<keyword id="KW-1003">Cell membrane</keyword>
<keyword id="KW-0225">Disease variant</keyword>
<keyword id="KW-1015">Disulfide bond</keyword>
<keyword id="KW-0038">Ectodermal dysplasia</keyword>
<keyword id="KW-0325">Glycoprotein</keyword>
<keyword id="KW-1183">Host cell receptor for virus entry</keyword>
<keyword id="KW-0945">Host-virus interaction</keyword>
<keyword id="KW-0393">Immunoglobulin domain</keyword>
<keyword id="KW-0472">Membrane</keyword>
<keyword id="KW-1267">Proteomics identification</keyword>
<keyword id="KW-0675">Receptor</keyword>
<keyword id="KW-1185">Reference proteome</keyword>
<keyword id="KW-0677">Repeat</keyword>
<keyword id="KW-0964">Secreted</keyword>
<keyword id="KW-0732">Signal</keyword>
<keyword id="KW-0812">Transmembrane</keyword>
<keyword id="KW-1133">Transmembrane helix</keyword>
<name>NECT4_HUMAN</name>
<sequence length="510" mass="55454">MPLSLGAEMWGPEAWLLLLLLLASFTGRCPAGELETSDVVTVVLGQDAKLPCFYRGDSGEQVGQVAWARVDAGEGAQELALLHSKYGLHVSPAYEGRVEQPPPPRNPLDGSVLLRNAVQADEGEYECRVSTFPAGSFQARLRLRVLVPPLPSLNPGPALEEGQGLTLAASCTAEGSPAPSVTWDTEVKGTTSSRSFKHSRSAAVTSEFHLVPSRSMNGQPLTCVVSHPGLLQDQRITHILHVSFLAEASVRGLEDQNLWHIGREGAMLKCLSEGQPPPSYNWTRLDGPLPSGVRVDGDTLGFPPLTTEHSGIYVCHVSNEFSSRDSQVTVDVLDPQEDSGKQVDLVSASVVVVGVIAALLFCLLVVVVVLMSRYHRRKAQQMTQKYEEELTLTRENSIRRLHSHHTDPRSQPEESVGLRAEGHPDSLKDNSSCSVMSEEPEGRSYSTLTTVREIETQTELLSPGSGRAEEEEDQDEGIKQAMNHFVQENGTLRAKPTGNGIYINGRGHLV</sequence>
<gene>
    <name evidence="14" type="primary">NECTIN4</name>
    <name type="synonym">LNIR</name>
    <name type="synonym">PRR4</name>
    <name type="synonym">PVRL4</name>
</gene>
<evidence type="ECO:0000255" key="1"/>
<evidence type="ECO:0000255" key="2">
    <source>
        <dbReference type="PROSITE-ProRule" id="PRU00114"/>
    </source>
</evidence>
<evidence type="ECO:0000256" key="3">
    <source>
        <dbReference type="SAM" id="MobiDB-lite"/>
    </source>
</evidence>
<evidence type="ECO:0000269" key="4">
    <source>
    </source>
</evidence>
<evidence type="ECO:0000269" key="5">
    <source>
    </source>
</evidence>
<evidence type="ECO:0000269" key="6">
    <source>
    </source>
</evidence>
<evidence type="ECO:0000269" key="7">
    <source>
    </source>
</evidence>
<evidence type="ECO:0000269" key="8">
    <source>
    </source>
</evidence>
<evidence type="ECO:0000269" key="9">
    <source>
    </source>
</evidence>
<evidence type="ECO:0000269" key="10">
    <source>
    </source>
</evidence>
<evidence type="ECO:0000269" key="11">
    <source>
    </source>
</evidence>
<evidence type="ECO:0000303" key="12">
    <source>
    </source>
</evidence>
<evidence type="ECO:0000305" key="13"/>
<evidence type="ECO:0000312" key="14">
    <source>
        <dbReference type="HGNC" id="HGNC:19688"/>
    </source>
</evidence>
<evidence type="ECO:0007744" key="15">
    <source>
        <dbReference type="PDB" id="4FRW"/>
    </source>
</evidence>
<evidence type="ECO:0007829" key="16">
    <source>
        <dbReference type="PDB" id="4FRW"/>
    </source>
</evidence>
<evidence type="ECO:0007829" key="17">
    <source>
        <dbReference type="PDB" id="4JJH"/>
    </source>
</evidence>